<dbReference type="EC" id="2.7.1.219" evidence="3"/>
<dbReference type="EMBL" id="AM260480">
    <property type="protein sequence ID" value="CAJ95118.1"/>
    <property type="molecule type" value="Genomic_DNA"/>
</dbReference>
<dbReference type="RefSeq" id="WP_010812612.1">
    <property type="nucleotide sequence ID" value="NZ_CP039288.1"/>
</dbReference>
<dbReference type="SMR" id="Q0K4F6"/>
<dbReference type="STRING" id="381666.H16_B0318"/>
<dbReference type="KEGG" id="reh:H16_B0318"/>
<dbReference type="eggNOG" id="COG3395">
    <property type="taxonomic scope" value="Bacteria"/>
</dbReference>
<dbReference type="HOGENOM" id="CLU_029424_1_0_4"/>
<dbReference type="OrthoDB" id="191465at2"/>
<dbReference type="BRENDA" id="2.7.1.219">
    <property type="organism ID" value="231"/>
</dbReference>
<dbReference type="Proteomes" id="UP000008210">
    <property type="component" value="Chromosome 2"/>
</dbReference>
<dbReference type="GO" id="GO:0005524">
    <property type="term" value="F:ATP binding"/>
    <property type="evidence" value="ECO:0007669"/>
    <property type="project" value="UniProtKB-KW"/>
</dbReference>
<dbReference type="GO" id="GO:0016301">
    <property type="term" value="F:kinase activity"/>
    <property type="evidence" value="ECO:0007669"/>
    <property type="project" value="UniProtKB-KW"/>
</dbReference>
<dbReference type="Gene3D" id="3.40.980.20">
    <property type="entry name" value="Four-carbon acid sugar kinase, nucleotide binding domain"/>
    <property type="match status" value="1"/>
</dbReference>
<dbReference type="Gene3D" id="3.40.50.10840">
    <property type="entry name" value="Putative sugar-binding, N-terminal domain"/>
    <property type="match status" value="1"/>
</dbReference>
<dbReference type="InterPro" id="IPR010737">
    <property type="entry name" value="4-carb_acid_sugar_kinase_N"/>
</dbReference>
<dbReference type="InterPro" id="IPR037051">
    <property type="entry name" value="4-carb_acid_sugar_kinase_N_sf"/>
</dbReference>
<dbReference type="InterPro" id="IPR031475">
    <property type="entry name" value="NBD_C"/>
</dbReference>
<dbReference type="InterPro" id="IPR042213">
    <property type="entry name" value="NBD_C_sf"/>
</dbReference>
<dbReference type="Pfam" id="PF17042">
    <property type="entry name" value="NBD_C"/>
    <property type="match status" value="1"/>
</dbReference>
<dbReference type="Pfam" id="PF07005">
    <property type="entry name" value="SBD_N"/>
    <property type="match status" value="1"/>
</dbReference>
<dbReference type="SUPFAM" id="SSF142764">
    <property type="entry name" value="YgbK-like"/>
    <property type="match status" value="1"/>
</dbReference>
<protein>
    <recommendedName>
        <fullName evidence="4">D-threonate kinase</fullName>
        <ecNumber evidence="3">2.7.1.219</ecNumber>
    </recommendedName>
</protein>
<organism>
    <name type="scientific">Cupriavidus necator (strain ATCC 17699 / DSM 428 / KCTC 22496 / NCIMB 10442 / H16 / Stanier 337)</name>
    <name type="common">Ralstonia eutropha</name>
    <dbReference type="NCBI Taxonomy" id="381666"/>
    <lineage>
        <taxon>Bacteria</taxon>
        <taxon>Pseudomonadati</taxon>
        <taxon>Pseudomonadota</taxon>
        <taxon>Betaproteobacteria</taxon>
        <taxon>Burkholderiales</taxon>
        <taxon>Burkholderiaceae</taxon>
        <taxon>Cupriavidus</taxon>
    </lineage>
</organism>
<sequence length="415" mass="42589">MSWLIIADDLSGAADCAIGYAMSGARTVVTLEAAPAGADLSQADVVACDVDSRRMAPQEAAARNLEAWHRGQGASRRLYKKIDSTLRGNWAAETAALAPLAGLAIVAPAFPATGRTTAGGCMFVNGQPLEDSDIWRLEALTGRADLVALLAARGLRATLLPLDTVRAGDATLRLTIAGLAREGVRAVVCDAQTEQDLAALAAATAQLDVPAFWVGSGGLARALAAPCLFEGGAPQPLPAPEGGPVLTLVGSLSGISGRQAACLRERTGMQSLVVPPRILREGAGHADWDAAQQSITGCLRAGRDLLVSIGRDDAFDPGEGPRLSAALAQLSLPGFQHTRGLIATGGETARAMLSAAGIGALMLRREVEPGVPLSDTPALPGVPARRVATKAGAFGSEAALWHAWQAMTESRAPSA</sequence>
<evidence type="ECO:0000250" key="1">
    <source>
        <dbReference type="UniProtKB" id="Q0KBC8"/>
    </source>
</evidence>
<evidence type="ECO:0000250" key="2">
    <source>
        <dbReference type="UniProtKB" id="Q6D0N7"/>
    </source>
</evidence>
<evidence type="ECO:0000269" key="3">
    <source>
    </source>
</evidence>
<evidence type="ECO:0000303" key="4">
    <source>
    </source>
</evidence>
<evidence type="ECO:0000305" key="5"/>
<evidence type="ECO:0000312" key="6">
    <source>
        <dbReference type="EMBL" id="CAJ95118.1"/>
    </source>
</evidence>
<comment type="function">
    <text evidence="3">Catalyzes the ATP-dependent phosphorylation of D-threonate to D-threonate 4-phosphate. Can also phosphorylate 4-hydroxy-L-threonine, with lower efficiency.</text>
</comment>
<comment type="catalytic activity">
    <reaction evidence="3">
        <text>D-threonate + ATP = 4-O-phospho-D-threonate + ADP + H(+)</text>
        <dbReference type="Rhea" id="RHEA:52388"/>
        <dbReference type="ChEBI" id="CHEBI:15378"/>
        <dbReference type="ChEBI" id="CHEBI:30616"/>
        <dbReference type="ChEBI" id="CHEBI:45912"/>
        <dbReference type="ChEBI" id="CHEBI:136590"/>
        <dbReference type="ChEBI" id="CHEBI:456216"/>
        <dbReference type="EC" id="2.7.1.219"/>
    </reaction>
</comment>
<comment type="biophysicochemical properties">
    <kinetics>
        <KM evidence="3">0.12 mM for D-threonate</KM>
        <KM evidence="3">86 mM for 4-hydroxy-L-threonine</KM>
        <text evidence="3">kcat is 45 sec(-1) with D-threonate as substrate. kcat is 27 sec(-1) with 4-hydroxy-L-threonine as substrate.</text>
    </kinetics>
</comment>
<comment type="disruption phenotype">
    <text evidence="3">Deletion mutant is unable to use D-threonate as a carbon source.</text>
</comment>
<comment type="similarity">
    <text evidence="5">Belongs to the four-carbon acid sugar kinase family.</text>
</comment>
<feature type="chain" id="PRO_0000439675" description="D-threonate kinase">
    <location>
        <begin position="1"/>
        <end position="415"/>
    </location>
</feature>
<feature type="binding site" evidence="2">
    <location>
        <position position="9"/>
    </location>
    <ligand>
        <name>substrate</name>
    </ligand>
</feature>
<feature type="binding site" evidence="2">
    <location>
        <position position="53"/>
    </location>
    <ligand>
        <name>substrate</name>
    </ligand>
</feature>
<feature type="binding site" evidence="2">
    <location>
        <begin position="81"/>
        <end position="84"/>
    </location>
    <ligand>
        <name>substrate</name>
    </ligand>
</feature>
<feature type="binding site" evidence="1">
    <location>
        <position position="251"/>
    </location>
    <ligand>
        <name>ATP</name>
        <dbReference type="ChEBI" id="CHEBI:30616"/>
    </ligand>
</feature>
<feature type="binding site" evidence="1">
    <location>
        <begin position="345"/>
        <end position="348"/>
    </location>
    <ligand>
        <name>ATP</name>
        <dbReference type="ChEBI" id="CHEBI:30616"/>
    </ligand>
</feature>
<feature type="binding site" evidence="1">
    <location>
        <position position="392"/>
    </location>
    <ligand>
        <name>ATP</name>
        <dbReference type="ChEBI" id="CHEBI:30616"/>
    </ligand>
</feature>
<name>DTNK_CUPNH</name>
<keyword id="KW-0067">ATP-binding</keyword>
<keyword id="KW-0119">Carbohydrate metabolism</keyword>
<keyword id="KW-0418">Kinase</keyword>
<keyword id="KW-0547">Nucleotide-binding</keyword>
<keyword id="KW-1185">Reference proteome</keyword>
<keyword id="KW-0808">Transferase</keyword>
<gene>
    <name evidence="4" type="primary">dtnK</name>
    <name evidence="6" type="ordered locus">H16_B0318</name>
</gene>
<reference key="1">
    <citation type="journal article" date="2006" name="Nat. Biotechnol.">
        <title>Genome sequence of the bioplastic-producing 'Knallgas' bacterium Ralstonia eutropha H16.</title>
        <authorList>
            <person name="Pohlmann A."/>
            <person name="Fricke W.F."/>
            <person name="Reinecke F."/>
            <person name="Kusian B."/>
            <person name="Liesegang H."/>
            <person name="Cramm R."/>
            <person name="Eitinger T."/>
            <person name="Ewering C."/>
            <person name="Poetter M."/>
            <person name="Schwartz E."/>
            <person name="Strittmatter A."/>
            <person name="Voss I."/>
            <person name="Gottschalk G."/>
            <person name="Steinbuechel A."/>
            <person name="Friedrich B."/>
            <person name="Bowien B."/>
        </authorList>
    </citation>
    <scope>NUCLEOTIDE SEQUENCE [LARGE SCALE GENOMIC DNA]</scope>
    <source>
        <strain>ATCC 17699 / DSM 428 / KCTC 22496 / NCIMB 10442 / H16 / Stanier 337</strain>
    </source>
</reference>
<reference key="2">
    <citation type="journal article" date="2016" name="Proc. Natl. Acad. Sci. U.S.A.">
        <title>Assignment of function to a domain of unknown function: DUF1537 is a new kinase family in catabolic pathways for acid sugars.</title>
        <authorList>
            <person name="Zhang X."/>
            <person name="Carter M.S."/>
            <person name="Vetting M.W."/>
            <person name="San Francisco B."/>
            <person name="Zhao S."/>
            <person name="Al-Obaidi N.F."/>
            <person name="Solbiati J.O."/>
            <person name="Thiaville J.J."/>
            <person name="de Crecy-Lagard V."/>
            <person name="Jacobson M.P."/>
            <person name="Almo S.C."/>
            <person name="Gerlt J.A."/>
        </authorList>
    </citation>
    <scope>FUNCTION</scope>
    <scope>CATALYTIC ACTIVITY</scope>
    <scope>BIOPHYSICOCHEMICAL PROPERTIES</scope>
    <scope>DISRUPTION PHENOTYPE</scope>
    <source>
        <strain>ATCC 17699 / DSM 428 / KCTC 22496 / NCIMB 10442 / H16 / Stanier 337</strain>
    </source>
</reference>
<accession>Q0K4F6</accession>
<proteinExistence type="evidence at protein level"/>